<proteinExistence type="inferred from homology"/>
<keyword id="KW-0408">Iron</keyword>
<keyword id="KW-0411">Iron-sulfur</keyword>
<keyword id="KW-0479">Metal-binding</keyword>
<gene>
    <name evidence="1" type="primary">erpA</name>
    <name type="ordered locus">PLES_06441</name>
</gene>
<feature type="chain" id="PRO_1000144925" description="Iron-sulfur cluster insertion protein ErpA">
    <location>
        <begin position="1"/>
        <end position="116"/>
    </location>
</feature>
<feature type="binding site" evidence="1">
    <location>
        <position position="44"/>
    </location>
    <ligand>
        <name>iron-sulfur cluster</name>
        <dbReference type="ChEBI" id="CHEBI:30408"/>
    </ligand>
</feature>
<feature type="binding site" evidence="1">
    <location>
        <position position="108"/>
    </location>
    <ligand>
        <name>iron-sulfur cluster</name>
        <dbReference type="ChEBI" id="CHEBI:30408"/>
    </ligand>
</feature>
<feature type="binding site" evidence="1">
    <location>
        <position position="110"/>
    </location>
    <ligand>
        <name>iron-sulfur cluster</name>
        <dbReference type="ChEBI" id="CHEBI:30408"/>
    </ligand>
</feature>
<name>ERPA_PSEA8</name>
<evidence type="ECO:0000255" key="1">
    <source>
        <dbReference type="HAMAP-Rule" id="MF_01380"/>
    </source>
</evidence>
<protein>
    <recommendedName>
        <fullName evidence="1">Iron-sulfur cluster insertion protein ErpA</fullName>
    </recommendedName>
</protein>
<sequence>MSIETFTPTPLLFTPGAANKVKTLIDEEGNPRLKLRVFVTGGGCSGFQYGFTFDEDIADDDTVIERDGVGLVVDPMSFQYLAGSEVDYQEGLEGSRFVIKNPNAATTCGCGQSFSI</sequence>
<accession>B7V623</accession>
<dbReference type="EMBL" id="FM209186">
    <property type="protein sequence ID" value="CAW25371.1"/>
    <property type="molecule type" value="Genomic_DNA"/>
</dbReference>
<dbReference type="RefSeq" id="WP_003085254.1">
    <property type="nucleotide sequence ID" value="NC_011770.1"/>
</dbReference>
<dbReference type="SMR" id="B7V623"/>
<dbReference type="GeneID" id="77219168"/>
<dbReference type="KEGG" id="pag:PLES_06441"/>
<dbReference type="HOGENOM" id="CLU_069054_5_3_6"/>
<dbReference type="GO" id="GO:0005829">
    <property type="term" value="C:cytosol"/>
    <property type="evidence" value="ECO:0007669"/>
    <property type="project" value="TreeGrafter"/>
</dbReference>
<dbReference type="GO" id="GO:0051537">
    <property type="term" value="F:2 iron, 2 sulfur cluster binding"/>
    <property type="evidence" value="ECO:0007669"/>
    <property type="project" value="TreeGrafter"/>
</dbReference>
<dbReference type="GO" id="GO:0051539">
    <property type="term" value="F:4 iron, 4 sulfur cluster binding"/>
    <property type="evidence" value="ECO:0007669"/>
    <property type="project" value="TreeGrafter"/>
</dbReference>
<dbReference type="GO" id="GO:0005506">
    <property type="term" value="F:iron ion binding"/>
    <property type="evidence" value="ECO:0007669"/>
    <property type="project" value="UniProtKB-UniRule"/>
</dbReference>
<dbReference type="GO" id="GO:0016226">
    <property type="term" value="P:iron-sulfur cluster assembly"/>
    <property type="evidence" value="ECO:0007669"/>
    <property type="project" value="UniProtKB-UniRule"/>
</dbReference>
<dbReference type="FunFam" id="2.60.300.12:FF:000002">
    <property type="entry name" value="Iron-sulfur cluster insertion protein ErpA"/>
    <property type="match status" value="1"/>
</dbReference>
<dbReference type="Gene3D" id="2.60.300.12">
    <property type="entry name" value="HesB-like domain"/>
    <property type="match status" value="1"/>
</dbReference>
<dbReference type="HAMAP" id="MF_01380">
    <property type="entry name" value="Fe_S_insert_ErpA"/>
    <property type="match status" value="1"/>
</dbReference>
<dbReference type="InterPro" id="IPR000361">
    <property type="entry name" value="FeS_biogenesis"/>
</dbReference>
<dbReference type="InterPro" id="IPR016092">
    <property type="entry name" value="FeS_cluster_insertion"/>
</dbReference>
<dbReference type="InterPro" id="IPR017870">
    <property type="entry name" value="FeS_cluster_insertion_CS"/>
</dbReference>
<dbReference type="InterPro" id="IPR023063">
    <property type="entry name" value="FeS_cluster_insertion_RrpA"/>
</dbReference>
<dbReference type="InterPro" id="IPR035903">
    <property type="entry name" value="HesB-like_dom_sf"/>
</dbReference>
<dbReference type="NCBIfam" id="TIGR00049">
    <property type="entry name" value="iron-sulfur cluster assembly accessory protein"/>
    <property type="match status" value="1"/>
</dbReference>
<dbReference type="NCBIfam" id="NF010147">
    <property type="entry name" value="PRK13623.1"/>
    <property type="match status" value="1"/>
</dbReference>
<dbReference type="PANTHER" id="PTHR43011">
    <property type="entry name" value="IRON-SULFUR CLUSTER ASSEMBLY 2 HOMOLOG, MITOCHONDRIAL"/>
    <property type="match status" value="1"/>
</dbReference>
<dbReference type="PANTHER" id="PTHR43011:SF1">
    <property type="entry name" value="IRON-SULFUR CLUSTER ASSEMBLY 2 HOMOLOG, MITOCHONDRIAL"/>
    <property type="match status" value="1"/>
</dbReference>
<dbReference type="Pfam" id="PF01521">
    <property type="entry name" value="Fe-S_biosyn"/>
    <property type="match status" value="1"/>
</dbReference>
<dbReference type="SUPFAM" id="SSF89360">
    <property type="entry name" value="HesB-like domain"/>
    <property type="match status" value="1"/>
</dbReference>
<dbReference type="PROSITE" id="PS01152">
    <property type="entry name" value="HESB"/>
    <property type="match status" value="1"/>
</dbReference>
<organism>
    <name type="scientific">Pseudomonas aeruginosa (strain LESB58)</name>
    <dbReference type="NCBI Taxonomy" id="557722"/>
    <lineage>
        <taxon>Bacteria</taxon>
        <taxon>Pseudomonadati</taxon>
        <taxon>Pseudomonadota</taxon>
        <taxon>Gammaproteobacteria</taxon>
        <taxon>Pseudomonadales</taxon>
        <taxon>Pseudomonadaceae</taxon>
        <taxon>Pseudomonas</taxon>
    </lineage>
</organism>
<reference key="1">
    <citation type="journal article" date="2009" name="Genome Res.">
        <title>Newly introduced genomic prophage islands are critical determinants of in vivo competitiveness in the Liverpool epidemic strain of Pseudomonas aeruginosa.</title>
        <authorList>
            <person name="Winstanley C."/>
            <person name="Langille M.G.I."/>
            <person name="Fothergill J.L."/>
            <person name="Kukavica-Ibrulj I."/>
            <person name="Paradis-Bleau C."/>
            <person name="Sanschagrin F."/>
            <person name="Thomson N.R."/>
            <person name="Winsor G.L."/>
            <person name="Quail M.A."/>
            <person name="Lennard N."/>
            <person name="Bignell A."/>
            <person name="Clarke L."/>
            <person name="Seeger K."/>
            <person name="Saunders D."/>
            <person name="Harris D."/>
            <person name="Parkhill J."/>
            <person name="Hancock R.E.W."/>
            <person name="Brinkman F.S.L."/>
            <person name="Levesque R.C."/>
        </authorList>
    </citation>
    <scope>NUCLEOTIDE SEQUENCE [LARGE SCALE GENOMIC DNA]</scope>
    <source>
        <strain>LESB58</strain>
    </source>
</reference>
<comment type="function">
    <text evidence="1">Required for insertion of 4Fe-4S clusters for at least IspG.</text>
</comment>
<comment type="cofactor">
    <cofactor evidence="1">
        <name>iron-sulfur cluster</name>
        <dbReference type="ChEBI" id="CHEBI:30408"/>
    </cofactor>
    <text evidence="1">Binds 1 iron-sulfur cluster per subunit.</text>
</comment>
<comment type="subunit">
    <text evidence="1">Homodimer.</text>
</comment>
<comment type="similarity">
    <text evidence="1">Belongs to the HesB/IscA family.</text>
</comment>